<accession>B5XVR1</accession>
<evidence type="ECO:0000255" key="1">
    <source>
        <dbReference type="HAMAP-Rule" id="MF_00333"/>
    </source>
</evidence>
<proteinExistence type="inferred from homology"/>
<protein>
    <recommendedName>
        <fullName evidence="1">Oxygen-dependent coproporphyrinogen-III oxidase</fullName>
        <shortName evidence="1">CPO</shortName>
        <shortName evidence="1">Coprogen oxidase</shortName>
        <shortName evidence="1">Coproporphyrinogenase</shortName>
        <ecNumber evidence="1">1.3.3.3</ecNumber>
    </recommendedName>
</protein>
<keyword id="KW-0963">Cytoplasm</keyword>
<keyword id="KW-0350">Heme biosynthesis</keyword>
<keyword id="KW-0479">Metal-binding</keyword>
<keyword id="KW-0560">Oxidoreductase</keyword>
<keyword id="KW-0627">Porphyrin biosynthesis</keyword>
<feature type="chain" id="PRO_1000119805" description="Oxygen-dependent coproporphyrinogen-III oxidase">
    <location>
        <begin position="1"/>
        <end position="299"/>
    </location>
</feature>
<feature type="region of interest" description="Important for dimerization" evidence="1">
    <location>
        <begin position="240"/>
        <end position="275"/>
    </location>
</feature>
<feature type="active site" description="Proton donor" evidence="1">
    <location>
        <position position="106"/>
    </location>
</feature>
<feature type="binding site" evidence="1">
    <location>
        <position position="92"/>
    </location>
    <ligand>
        <name>substrate</name>
    </ligand>
</feature>
<feature type="binding site" evidence="1">
    <location>
        <position position="96"/>
    </location>
    <ligand>
        <name>a divalent metal cation</name>
        <dbReference type="ChEBI" id="CHEBI:60240"/>
    </ligand>
</feature>
<feature type="binding site" evidence="1">
    <location>
        <position position="106"/>
    </location>
    <ligand>
        <name>a divalent metal cation</name>
        <dbReference type="ChEBI" id="CHEBI:60240"/>
    </ligand>
</feature>
<feature type="binding site" evidence="1">
    <location>
        <begin position="108"/>
        <end position="110"/>
    </location>
    <ligand>
        <name>substrate</name>
    </ligand>
</feature>
<feature type="binding site" evidence="1">
    <location>
        <position position="145"/>
    </location>
    <ligand>
        <name>a divalent metal cation</name>
        <dbReference type="ChEBI" id="CHEBI:60240"/>
    </ligand>
</feature>
<feature type="binding site" evidence="1">
    <location>
        <position position="175"/>
    </location>
    <ligand>
        <name>a divalent metal cation</name>
        <dbReference type="ChEBI" id="CHEBI:60240"/>
    </ligand>
</feature>
<feature type="binding site" evidence="1">
    <location>
        <begin position="258"/>
        <end position="260"/>
    </location>
    <ligand>
        <name>substrate</name>
    </ligand>
</feature>
<feature type="site" description="Important for dimerization" evidence="1">
    <location>
        <position position="175"/>
    </location>
</feature>
<gene>
    <name evidence="1" type="primary">hemF</name>
    <name type="ordered locus">KPK_1358</name>
</gene>
<comment type="function">
    <text evidence="1">Involved in the heme biosynthesis. Catalyzes the aerobic oxidative decarboxylation of propionate groups of rings A and B of coproporphyrinogen-III to yield the vinyl groups in protoporphyrinogen-IX.</text>
</comment>
<comment type="catalytic activity">
    <reaction evidence="1">
        <text>coproporphyrinogen III + O2 + 2 H(+) = protoporphyrinogen IX + 2 CO2 + 2 H2O</text>
        <dbReference type="Rhea" id="RHEA:18257"/>
        <dbReference type="ChEBI" id="CHEBI:15377"/>
        <dbReference type="ChEBI" id="CHEBI:15378"/>
        <dbReference type="ChEBI" id="CHEBI:15379"/>
        <dbReference type="ChEBI" id="CHEBI:16526"/>
        <dbReference type="ChEBI" id="CHEBI:57307"/>
        <dbReference type="ChEBI" id="CHEBI:57309"/>
        <dbReference type="EC" id="1.3.3.3"/>
    </reaction>
</comment>
<comment type="cofactor">
    <cofactor evidence="1">
        <name>a divalent metal cation</name>
        <dbReference type="ChEBI" id="CHEBI:60240"/>
    </cofactor>
</comment>
<comment type="pathway">
    <text evidence="1">Porphyrin-containing compound metabolism; protoporphyrin-IX biosynthesis; protoporphyrinogen-IX from coproporphyrinogen-III (O2 route): step 1/1.</text>
</comment>
<comment type="subunit">
    <text evidence="1">Homodimer.</text>
</comment>
<comment type="subcellular location">
    <subcellularLocation>
        <location evidence="1">Cytoplasm</location>
    </subcellularLocation>
</comment>
<comment type="similarity">
    <text evidence="1">Belongs to the aerobic coproporphyrinogen-III oxidase family.</text>
</comment>
<sequence>MKPDAAQVKTFLLQLQDNLCQQLSAVDGAPFIEDAWQREGGGGGRSRVLRDGNVFEQAGVNFSHVHGDAMPASATAHRPELAGRSFEAMGVSLVVHPLNPYVPTSHANVRFFIAEKPGADPVWWFGGGFDLTPYYGFEEDAIHWHRTARDLCLPFGEEVYPRYKKWCDDYFYLKHRQEQRGIGGLFFDDLNTPDFDHCFAFMQAVGNGYADAYLPIVERRKAMPYGERERHFQLYRRGRYVEFNLVWDRGTLFGLQTGGRTESILMSMPPLVRWEYDYQPEPGSPEAALSEFIQVRDWL</sequence>
<dbReference type="EC" id="1.3.3.3" evidence="1"/>
<dbReference type="EMBL" id="CP000964">
    <property type="protein sequence ID" value="ACI11085.1"/>
    <property type="molecule type" value="Genomic_DNA"/>
</dbReference>
<dbReference type="SMR" id="B5XVR1"/>
<dbReference type="KEGG" id="kpe:KPK_1358"/>
<dbReference type="HOGENOM" id="CLU_026169_0_1_6"/>
<dbReference type="UniPathway" id="UPA00251">
    <property type="reaction ID" value="UER00322"/>
</dbReference>
<dbReference type="Proteomes" id="UP000001734">
    <property type="component" value="Chromosome"/>
</dbReference>
<dbReference type="GO" id="GO:0005737">
    <property type="term" value="C:cytoplasm"/>
    <property type="evidence" value="ECO:0007669"/>
    <property type="project" value="UniProtKB-SubCell"/>
</dbReference>
<dbReference type="GO" id="GO:0004109">
    <property type="term" value="F:coproporphyrinogen oxidase activity"/>
    <property type="evidence" value="ECO:0007669"/>
    <property type="project" value="UniProtKB-UniRule"/>
</dbReference>
<dbReference type="GO" id="GO:0046872">
    <property type="term" value="F:metal ion binding"/>
    <property type="evidence" value="ECO:0007669"/>
    <property type="project" value="UniProtKB-KW"/>
</dbReference>
<dbReference type="GO" id="GO:0042803">
    <property type="term" value="F:protein homodimerization activity"/>
    <property type="evidence" value="ECO:0000250"/>
    <property type="project" value="UniProtKB"/>
</dbReference>
<dbReference type="GO" id="GO:0006782">
    <property type="term" value="P:protoporphyrinogen IX biosynthetic process"/>
    <property type="evidence" value="ECO:0007669"/>
    <property type="project" value="UniProtKB-UniRule"/>
</dbReference>
<dbReference type="FunFam" id="3.40.1500.10:FF:000001">
    <property type="entry name" value="Oxygen-dependent coproporphyrinogen-III oxidase"/>
    <property type="match status" value="1"/>
</dbReference>
<dbReference type="Gene3D" id="3.40.1500.10">
    <property type="entry name" value="Coproporphyrinogen III oxidase, aerobic"/>
    <property type="match status" value="1"/>
</dbReference>
<dbReference type="HAMAP" id="MF_00333">
    <property type="entry name" value="Coprogen_oxidas"/>
    <property type="match status" value="1"/>
</dbReference>
<dbReference type="InterPro" id="IPR001260">
    <property type="entry name" value="Coprogen_oxidase_aer"/>
</dbReference>
<dbReference type="InterPro" id="IPR036406">
    <property type="entry name" value="Coprogen_oxidase_aer_sf"/>
</dbReference>
<dbReference type="InterPro" id="IPR018375">
    <property type="entry name" value="Coprogen_oxidase_CS"/>
</dbReference>
<dbReference type="NCBIfam" id="NF003727">
    <property type="entry name" value="PRK05330.1"/>
    <property type="match status" value="1"/>
</dbReference>
<dbReference type="PANTHER" id="PTHR10755">
    <property type="entry name" value="COPROPORPHYRINOGEN III OXIDASE, MITOCHONDRIAL"/>
    <property type="match status" value="1"/>
</dbReference>
<dbReference type="PANTHER" id="PTHR10755:SF0">
    <property type="entry name" value="OXYGEN-DEPENDENT COPROPORPHYRINOGEN-III OXIDASE, MITOCHONDRIAL"/>
    <property type="match status" value="1"/>
</dbReference>
<dbReference type="Pfam" id="PF01218">
    <property type="entry name" value="Coprogen_oxidas"/>
    <property type="match status" value="1"/>
</dbReference>
<dbReference type="PIRSF" id="PIRSF000166">
    <property type="entry name" value="Coproporphyri_ox"/>
    <property type="match status" value="1"/>
</dbReference>
<dbReference type="PRINTS" id="PR00073">
    <property type="entry name" value="COPRGNOXDASE"/>
</dbReference>
<dbReference type="SUPFAM" id="SSF102886">
    <property type="entry name" value="Coproporphyrinogen III oxidase"/>
    <property type="match status" value="1"/>
</dbReference>
<dbReference type="PROSITE" id="PS01021">
    <property type="entry name" value="COPROGEN_OXIDASE"/>
    <property type="match status" value="1"/>
</dbReference>
<reference key="1">
    <citation type="journal article" date="2008" name="PLoS Genet.">
        <title>Complete genome sequence of the N2-fixing broad host range endophyte Klebsiella pneumoniae 342 and virulence predictions verified in mice.</title>
        <authorList>
            <person name="Fouts D.E."/>
            <person name="Tyler H.L."/>
            <person name="DeBoy R.T."/>
            <person name="Daugherty S."/>
            <person name="Ren Q."/>
            <person name="Badger J.H."/>
            <person name="Durkin A.S."/>
            <person name="Huot H."/>
            <person name="Shrivastava S."/>
            <person name="Kothari S."/>
            <person name="Dodson R.J."/>
            <person name="Mohamoud Y."/>
            <person name="Khouri H."/>
            <person name="Roesch L.F.W."/>
            <person name="Krogfelt K.A."/>
            <person name="Struve C."/>
            <person name="Triplett E.W."/>
            <person name="Methe B.A."/>
        </authorList>
    </citation>
    <scope>NUCLEOTIDE SEQUENCE [LARGE SCALE GENOMIC DNA]</scope>
    <source>
        <strain>342</strain>
    </source>
</reference>
<name>HEM6_KLEP3</name>
<organism>
    <name type="scientific">Klebsiella pneumoniae (strain 342)</name>
    <dbReference type="NCBI Taxonomy" id="507522"/>
    <lineage>
        <taxon>Bacteria</taxon>
        <taxon>Pseudomonadati</taxon>
        <taxon>Pseudomonadota</taxon>
        <taxon>Gammaproteobacteria</taxon>
        <taxon>Enterobacterales</taxon>
        <taxon>Enterobacteriaceae</taxon>
        <taxon>Klebsiella/Raoultella group</taxon>
        <taxon>Klebsiella</taxon>
        <taxon>Klebsiella pneumoniae complex</taxon>
    </lineage>
</organism>